<accession>Q91ZF0</accession>
<accession>Q9D9S7</accession>
<comment type="function">
    <text evidence="1 4 5">The iron-bound form is redox-active and can function as electron carrier (By similarity). Stimulates the ATPase activity of several Hsp70-type chaperones. This ability is enhanced by iron-binding. Plays a role in the diphthamide biosynthesis, a post-translational modification of histidine which occurs in translation elongation factor 2 (EEF2).</text>
</comment>
<comment type="pathway">
    <text>Protein modification; peptidyl-diphthamide biosynthesis.</text>
</comment>
<comment type="subunit">
    <text evidence="1">Monomer and homooligomer. Iron binding promotes oligomerization (By similarity).</text>
</comment>
<comment type="subcellular location">
    <subcellularLocation>
        <location evidence="5">Cytoplasm</location>
        <location evidence="5">Cytoskeleton</location>
    </subcellularLocation>
</comment>
<comment type="tissue specificity">
    <text evidence="4">Detected in heart, brain, spleen, lung, liver, kidney and testis.</text>
</comment>
<comment type="domain">
    <text evidence="3">The DPH-type metal-binding (MB) domain can bind either zinc or iron ions.</text>
</comment>
<comment type="disruption phenotype">
    <text evidence="5">High embryonic lethality at 14.5 dpc. As early as 10.5 dpc, embryos are smaller than their wild-type littermates. Embryos that survive long enough to initiate digit formation show one or more additional preaxial digits.</text>
</comment>
<comment type="similarity">
    <text evidence="6">Belongs to the DPH4 family.</text>
</comment>
<comment type="sequence caution" evidence="6">
    <conflict type="miscellaneous discrepancy">
        <sequence resource="EMBL-CDS" id="AAK21968"/>
    </conflict>
    <text>A nucleotide mismatch versus the mouse genome results in the formation of an upstream ATG start codon.</text>
</comment>
<keyword id="KW-0002">3D-structure</keyword>
<keyword id="KW-0963">Cytoplasm</keyword>
<keyword id="KW-0206">Cytoskeleton</keyword>
<keyword id="KW-0249">Electron transport</keyword>
<keyword id="KW-0408">Iron</keyword>
<keyword id="KW-0479">Metal-binding</keyword>
<keyword id="KW-1185">Reference proteome</keyword>
<keyword id="KW-0813">Transport</keyword>
<keyword id="KW-0862">Zinc</keyword>
<reference key="1">
    <citation type="journal article" date="2001" name="Gene">
        <title>Cloning and characterization of a new soluble murine J-domain protein that stimulates BiP, Hsc70 and DnaK ATPase activity with different efficiencies.</title>
        <authorList>
            <person name="Kroczynska B."/>
            <person name="Blond S.Y."/>
        </authorList>
    </citation>
    <scope>NUCLEOTIDE SEQUENCE [MRNA]</scope>
    <scope>FUNCTION</scope>
    <scope>TISSUE SPECIFICITY</scope>
    <source>
        <tissue>Embryo</tissue>
    </source>
</reference>
<reference key="2">
    <citation type="journal article" date="2005" name="Science">
        <title>The transcriptional landscape of the mammalian genome.</title>
        <authorList>
            <person name="Carninci P."/>
            <person name="Kasukawa T."/>
            <person name="Katayama S."/>
            <person name="Gough J."/>
            <person name="Frith M.C."/>
            <person name="Maeda N."/>
            <person name="Oyama R."/>
            <person name="Ravasi T."/>
            <person name="Lenhard B."/>
            <person name="Wells C."/>
            <person name="Kodzius R."/>
            <person name="Shimokawa K."/>
            <person name="Bajic V.B."/>
            <person name="Brenner S.E."/>
            <person name="Batalov S."/>
            <person name="Forrest A.R."/>
            <person name="Zavolan M."/>
            <person name="Davis M.J."/>
            <person name="Wilming L.G."/>
            <person name="Aidinis V."/>
            <person name="Allen J.E."/>
            <person name="Ambesi-Impiombato A."/>
            <person name="Apweiler R."/>
            <person name="Aturaliya R.N."/>
            <person name="Bailey T.L."/>
            <person name="Bansal M."/>
            <person name="Baxter L."/>
            <person name="Beisel K.W."/>
            <person name="Bersano T."/>
            <person name="Bono H."/>
            <person name="Chalk A.M."/>
            <person name="Chiu K.P."/>
            <person name="Choudhary V."/>
            <person name="Christoffels A."/>
            <person name="Clutterbuck D.R."/>
            <person name="Crowe M.L."/>
            <person name="Dalla E."/>
            <person name="Dalrymple B.P."/>
            <person name="de Bono B."/>
            <person name="Della Gatta G."/>
            <person name="di Bernardo D."/>
            <person name="Down T."/>
            <person name="Engstrom P."/>
            <person name="Fagiolini M."/>
            <person name="Faulkner G."/>
            <person name="Fletcher C.F."/>
            <person name="Fukushima T."/>
            <person name="Furuno M."/>
            <person name="Futaki S."/>
            <person name="Gariboldi M."/>
            <person name="Georgii-Hemming P."/>
            <person name="Gingeras T.R."/>
            <person name="Gojobori T."/>
            <person name="Green R.E."/>
            <person name="Gustincich S."/>
            <person name="Harbers M."/>
            <person name="Hayashi Y."/>
            <person name="Hensch T.K."/>
            <person name="Hirokawa N."/>
            <person name="Hill D."/>
            <person name="Huminiecki L."/>
            <person name="Iacono M."/>
            <person name="Ikeo K."/>
            <person name="Iwama A."/>
            <person name="Ishikawa T."/>
            <person name="Jakt M."/>
            <person name="Kanapin A."/>
            <person name="Katoh M."/>
            <person name="Kawasawa Y."/>
            <person name="Kelso J."/>
            <person name="Kitamura H."/>
            <person name="Kitano H."/>
            <person name="Kollias G."/>
            <person name="Krishnan S.P."/>
            <person name="Kruger A."/>
            <person name="Kummerfeld S.K."/>
            <person name="Kurochkin I.V."/>
            <person name="Lareau L.F."/>
            <person name="Lazarevic D."/>
            <person name="Lipovich L."/>
            <person name="Liu J."/>
            <person name="Liuni S."/>
            <person name="McWilliam S."/>
            <person name="Madan Babu M."/>
            <person name="Madera M."/>
            <person name="Marchionni L."/>
            <person name="Matsuda H."/>
            <person name="Matsuzawa S."/>
            <person name="Miki H."/>
            <person name="Mignone F."/>
            <person name="Miyake S."/>
            <person name="Morris K."/>
            <person name="Mottagui-Tabar S."/>
            <person name="Mulder N."/>
            <person name="Nakano N."/>
            <person name="Nakauchi H."/>
            <person name="Ng P."/>
            <person name="Nilsson R."/>
            <person name="Nishiguchi S."/>
            <person name="Nishikawa S."/>
            <person name="Nori F."/>
            <person name="Ohara O."/>
            <person name="Okazaki Y."/>
            <person name="Orlando V."/>
            <person name="Pang K.C."/>
            <person name="Pavan W.J."/>
            <person name="Pavesi G."/>
            <person name="Pesole G."/>
            <person name="Petrovsky N."/>
            <person name="Piazza S."/>
            <person name="Reed J."/>
            <person name="Reid J.F."/>
            <person name="Ring B.Z."/>
            <person name="Ringwald M."/>
            <person name="Rost B."/>
            <person name="Ruan Y."/>
            <person name="Salzberg S.L."/>
            <person name="Sandelin A."/>
            <person name="Schneider C."/>
            <person name="Schoenbach C."/>
            <person name="Sekiguchi K."/>
            <person name="Semple C.A."/>
            <person name="Seno S."/>
            <person name="Sessa L."/>
            <person name="Sheng Y."/>
            <person name="Shibata Y."/>
            <person name="Shimada H."/>
            <person name="Shimada K."/>
            <person name="Silva D."/>
            <person name="Sinclair B."/>
            <person name="Sperling S."/>
            <person name="Stupka E."/>
            <person name="Sugiura K."/>
            <person name="Sultana R."/>
            <person name="Takenaka Y."/>
            <person name="Taki K."/>
            <person name="Tammoja K."/>
            <person name="Tan S.L."/>
            <person name="Tang S."/>
            <person name="Taylor M.S."/>
            <person name="Tegner J."/>
            <person name="Teichmann S.A."/>
            <person name="Ueda H.R."/>
            <person name="van Nimwegen E."/>
            <person name="Verardo R."/>
            <person name="Wei C.L."/>
            <person name="Yagi K."/>
            <person name="Yamanishi H."/>
            <person name="Zabarovsky E."/>
            <person name="Zhu S."/>
            <person name="Zimmer A."/>
            <person name="Hide W."/>
            <person name="Bult C."/>
            <person name="Grimmond S.M."/>
            <person name="Teasdale R.D."/>
            <person name="Liu E.T."/>
            <person name="Brusic V."/>
            <person name="Quackenbush J."/>
            <person name="Wahlestedt C."/>
            <person name="Mattick J.S."/>
            <person name="Hume D.A."/>
            <person name="Kai C."/>
            <person name="Sasaki D."/>
            <person name="Tomaru Y."/>
            <person name="Fukuda S."/>
            <person name="Kanamori-Katayama M."/>
            <person name="Suzuki M."/>
            <person name="Aoki J."/>
            <person name="Arakawa T."/>
            <person name="Iida J."/>
            <person name="Imamura K."/>
            <person name="Itoh M."/>
            <person name="Kato T."/>
            <person name="Kawaji H."/>
            <person name="Kawagashira N."/>
            <person name="Kawashima T."/>
            <person name="Kojima M."/>
            <person name="Kondo S."/>
            <person name="Konno H."/>
            <person name="Nakano K."/>
            <person name="Ninomiya N."/>
            <person name="Nishio T."/>
            <person name="Okada M."/>
            <person name="Plessy C."/>
            <person name="Shibata K."/>
            <person name="Shiraki T."/>
            <person name="Suzuki S."/>
            <person name="Tagami M."/>
            <person name="Waki K."/>
            <person name="Watahiki A."/>
            <person name="Okamura-Oho Y."/>
            <person name="Suzuki H."/>
            <person name="Kawai J."/>
            <person name="Hayashizaki Y."/>
        </authorList>
    </citation>
    <scope>NUCLEOTIDE SEQUENCE [LARGE SCALE MRNA]</scope>
    <source>
        <strain>C57BL/6J</strain>
        <tissue>Testis</tissue>
    </source>
</reference>
<reference key="3">
    <citation type="journal article" date="2004" name="Genome Res.">
        <title>The status, quality, and expansion of the NIH full-length cDNA project: the Mammalian Gene Collection (MGC).</title>
        <authorList>
            <consortium name="The MGC Project Team"/>
        </authorList>
    </citation>
    <scope>NUCLEOTIDE SEQUENCE [LARGE SCALE MRNA]</scope>
    <source>
        <strain>C57BL/6J</strain>
        <strain>FVB/N</strain>
        <tissue>Mammary tumor</tissue>
        <tissue>Thymus</tissue>
    </source>
</reference>
<reference key="4">
    <citation type="journal article" date="2008" name="J. Cell Sci.">
        <title>Diphthamide modification of eEF2 requires a J-domain protein and is essential for normal development.</title>
        <authorList>
            <person name="Webb T.R."/>
            <person name="Cross S.H."/>
            <person name="McKie L."/>
            <person name="Edgar R."/>
            <person name="Vizor L."/>
            <person name="Harrison J."/>
            <person name="Peters J."/>
            <person name="Jackson I.J."/>
        </authorList>
    </citation>
    <scope>FUNCTION IN DIPHTHAMIDE BIOSYNTHESIS</scope>
    <scope>DISRUPTION PHENOTYPE</scope>
    <scope>SUBCELLULAR LOCATION</scope>
</reference>
<reference key="5">
    <citation type="journal article" date="2010" name="Cell">
        <title>A tissue-specific atlas of mouse protein phosphorylation and expression.</title>
        <authorList>
            <person name="Huttlin E.L."/>
            <person name="Jedrychowski M.P."/>
            <person name="Elias J.E."/>
            <person name="Goswami T."/>
            <person name="Rad R."/>
            <person name="Beausoleil S.A."/>
            <person name="Villen J."/>
            <person name="Haas W."/>
            <person name="Sowa M.E."/>
            <person name="Gygi S.P."/>
        </authorList>
    </citation>
    <scope>IDENTIFICATION BY MASS SPECTROMETRY [LARGE SCALE ANALYSIS]</scope>
    <source>
        <tissue>Testis</tissue>
    </source>
</reference>
<reference key="6">
    <citation type="submission" date="2004-11" db="PDB data bank">
        <title>Solution structure of J-domain of mouse DNAJ-like protein.</title>
        <authorList>
            <consortium name="RIKEN structural genomics initiative (RSGI)"/>
        </authorList>
    </citation>
    <scope>STRUCTURE BY NMR OF 1-81</scope>
</reference>
<protein>
    <recommendedName>
        <fullName>DnaJ homolog subfamily C member 24</fullName>
    </recommendedName>
    <alternativeName>
        <fullName>CSL-type zinc finger-containing protein 3</fullName>
    </alternativeName>
    <alternativeName>
        <fullName>Diphthamide biosynthesis protein 4</fullName>
    </alternativeName>
    <alternativeName>
        <fullName>J domain protein DjC7</fullName>
    </alternativeName>
</protein>
<evidence type="ECO:0000250" key="1"/>
<evidence type="ECO:0000255" key="2">
    <source>
        <dbReference type="PROSITE-ProRule" id="PRU00286"/>
    </source>
</evidence>
<evidence type="ECO:0000255" key="3">
    <source>
        <dbReference type="PROSITE-ProRule" id="PRU00456"/>
    </source>
</evidence>
<evidence type="ECO:0000269" key="4">
    <source>
    </source>
</evidence>
<evidence type="ECO:0000269" key="5">
    <source>
    </source>
</evidence>
<evidence type="ECO:0000305" key="6"/>
<evidence type="ECO:0007829" key="7">
    <source>
        <dbReference type="PDB" id="1WJZ"/>
    </source>
</evidence>
<name>DJC24_MOUSE</name>
<gene>
    <name type="primary">Dnajc24</name>
    <name type="synonym">Dph4</name>
    <name type="synonym">Zcsl3</name>
</gene>
<sequence length="148" mass="16922">MALEQTLKKDWYSILGADPSANMSDLKQKYQKLILLYHPDKQSADVPAGTMEECMQKFIEIDQAWKILGNEETKKKYDLQRHEDELRNVGPVDAQVRLEEMSWNQGDESFFLSCRCGGKYTVSKDEAQEATLISCDACSLIVELLHQS</sequence>
<dbReference type="EMBL" id="AY028460">
    <property type="protein sequence ID" value="AAK21968.1"/>
    <property type="status" value="ALT_SEQ"/>
    <property type="molecule type" value="mRNA"/>
</dbReference>
<dbReference type="EMBL" id="AK006521">
    <property type="protein sequence ID" value="BAB24631.1"/>
    <property type="molecule type" value="mRNA"/>
</dbReference>
<dbReference type="EMBL" id="AL590380">
    <property type="status" value="NOT_ANNOTATED_CDS"/>
    <property type="molecule type" value="Genomic_DNA"/>
</dbReference>
<dbReference type="EMBL" id="AL928773">
    <property type="status" value="NOT_ANNOTATED_CDS"/>
    <property type="molecule type" value="Genomic_DNA"/>
</dbReference>
<dbReference type="EMBL" id="BX649381">
    <property type="status" value="NOT_ANNOTATED_CDS"/>
    <property type="molecule type" value="Genomic_DNA"/>
</dbReference>
<dbReference type="EMBL" id="BC030072">
    <property type="protein sequence ID" value="AAH30072.1"/>
    <property type="molecule type" value="mRNA"/>
</dbReference>
<dbReference type="EMBL" id="BC091774">
    <property type="protein sequence ID" value="AAH91774.1"/>
    <property type="molecule type" value="mRNA"/>
</dbReference>
<dbReference type="CCDS" id="CCDS16501.1"/>
<dbReference type="RefSeq" id="NP_081268.1">
    <property type="nucleotide sequence ID" value="NM_026992.3"/>
</dbReference>
<dbReference type="PDB" id="1WJZ">
    <property type="method" value="NMR"/>
    <property type="chains" value="A=1-81"/>
</dbReference>
<dbReference type="PDBsum" id="1WJZ"/>
<dbReference type="BMRB" id="Q91ZF0"/>
<dbReference type="SMR" id="Q91ZF0"/>
<dbReference type="BioGRID" id="221232">
    <property type="interactions" value="1"/>
</dbReference>
<dbReference type="FunCoup" id="Q91ZF0">
    <property type="interactions" value="2695"/>
</dbReference>
<dbReference type="STRING" id="10090.ENSMUSP00000099615"/>
<dbReference type="PhosphoSitePlus" id="Q91ZF0"/>
<dbReference type="PaxDb" id="10090-ENSMUSP00000099615"/>
<dbReference type="ProteomicsDB" id="279714"/>
<dbReference type="Pumba" id="Q91ZF0"/>
<dbReference type="Antibodypedia" id="12795">
    <property type="antibodies" value="112 antibodies from 23 providers"/>
</dbReference>
<dbReference type="DNASU" id="99349"/>
<dbReference type="Ensembl" id="ENSMUST00000102555.11">
    <property type="protein sequence ID" value="ENSMUSP00000099615.5"/>
    <property type="gene ID" value="ENSMUSG00000027166.15"/>
</dbReference>
<dbReference type="GeneID" id="99349"/>
<dbReference type="KEGG" id="mmu:99349"/>
<dbReference type="UCSC" id="uc008llf.2">
    <property type="organism name" value="mouse"/>
</dbReference>
<dbReference type="AGR" id="MGI:1919522"/>
<dbReference type="CTD" id="120526"/>
<dbReference type="MGI" id="MGI:1919522">
    <property type="gene designation" value="Dnajc24"/>
</dbReference>
<dbReference type="VEuPathDB" id="HostDB:ENSMUSG00000027166"/>
<dbReference type="eggNOG" id="KOG0715">
    <property type="taxonomic scope" value="Eukaryota"/>
</dbReference>
<dbReference type="GeneTree" id="ENSGT00390000005430"/>
<dbReference type="InParanoid" id="Q91ZF0"/>
<dbReference type="OMA" id="LEDMTWE"/>
<dbReference type="OrthoDB" id="66964at2759"/>
<dbReference type="Reactome" id="R-MMU-5358493">
    <property type="pathway name" value="Synthesis of diphthamide-EEF2"/>
</dbReference>
<dbReference type="UniPathway" id="UPA00559"/>
<dbReference type="BioGRID-ORCS" id="99349">
    <property type="hits" value="7 hits in 78 CRISPR screens"/>
</dbReference>
<dbReference type="ChiTaRS" id="Dnajc24">
    <property type="organism name" value="mouse"/>
</dbReference>
<dbReference type="EvolutionaryTrace" id="Q91ZF0"/>
<dbReference type="PRO" id="PR:Q91ZF0"/>
<dbReference type="Proteomes" id="UP000000589">
    <property type="component" value="Chromosome 2"/>
</dbReference>
<dbReference type="RNAct" id="Q91ZF0">
    <property type="molecule type" value="protein"/>
</dbReference>
<dbReference type="Bgee" id="ENSMUSG00000027166">
    <property type="expression patterns" value="Expressed in seminal vesicle and 235 other cell types or tissues"/>
</dbReference>
<dbReference type="ExpressionAtlas" id="Q91ZF0">
    <property type="expression patterns" value="baseline and differential"/>
</dbReference>
<dbReference type="GO" id="GO:0015629">
    <property type="term" value="C:actin cytoskeleton"/>
    <property type="evidence" value="ECO:0000314"/>
    <property type="project" value="MGI"/>
</dbReference>
<dbReference type="GO" id="GO:0005737">
    <property type="term" value="C:cytoplasm"/>
    <property type="evidence" value="ECO:0007669"/>
    <property type="project" value="UniProtKB-KW"/>
</dbReference>
<dbReference type="GO" id="GO:0001671">
    <property type="term" value="F:ATPase activator activity"/>
    <property type="evidence" value="ECO:0000250"/>
    <property type="project" value="UniProtKB"/>
</dbReference>
<dbReference type="GO" id="GO:0008198">
    <property type="term" value="F:ferrous iron binding"/>
    <property type="evidence" value="ECO:0000250"/>
    <property type="project" value="UniProtKB"/>
</dbReference>
<dbReference type="GO" id="GO:0008270">
    <property type="term" value="F:zinc ion binding"/>
    <property type="evidence" value="ECO:0000250"/>
    <property type="project" value="UniProtKB"/>
</dbReference>
<dbReference type="GO" id="GO:0032781">
    <property type="term" value="P:positive regulation of ATP-dependent activity"/>
    <property type="evidence" value="ECO:0000250"/>
    <property type="project" value="UniProtKB"/>
</dbReference>
<dbReference type="GO" id="GO:0017183">
    <property type="term" value="P:protein histidyl modification to diphthamide"/>
    <property type="evidence" value="ECO:0000315"/>
    <property type="project" value="MGI"/>
</dbReference>
<dbReference type="CDD" id="cd06257">
    <property type="entry name" value="DnaJ"/>
    <property type="match status" value="1"/>
</dbReference>
<dbReference type="FunFam" id="1.10.287.110:FF:000056">
    <property type="entry name" value="DnaJ (Hsp40) homolog, subfamily C, member 24"/>
    <property type="match status" value="1"/>
</dbReference>
<dbReference type="FunFam" id="3.10.660.10:FF:000002">
    <property type="entry name" value="DnaJ (Hsp40) homolog, subfamily C, member 24"/>
    <property type="match status" value="1"/>
</dbReference>
<dbReference type="Gene3D" id="1.10.287.110">
    <property type="entry name" value="DnaJ domain"/>
    <property type="match status" value="1"/>
</dbReference>
<dbReference type="Gene3D" id="3.10.660.10">
    <property type="entry name" value="DPH Zinc finger"/>
    <property type="match status" value="1"/>
</dbReference>
<dbReference type="InterPro" id="IPR001623">
    <property type="entry name" value="DnaJ_domain"/>
</dbReference>
<dbReference type="InterPro" id="IPR007872">
    <property type="entry name" value="DPH_MB_dom"/>
</dbReference>
<dbReference type="InterPro" id="IPR036671">
    <property type="entry name" value="DPH_MB_sf"/>
</dbReference>
<dbReference type="InterPro" id="IPR036869">
    <property type="entry name" value="J_dom_sf"/>
</dbReference>
<dbReference type="PANTHER" id="PTHR45255">
    <property type="entry name" value="DNAJ HOMOLOG SUBFAMILY C MEMBER 24"/>
    <property type="match status" value="1"/>
</dbReference>
<dbReference type="PANTHER" id="PTHR45255:SF1">
    <property type="entry name" value="DNAJ HOMOLOG SUBFAMILY C MEMBER 24"/>
    <property type="match status" value="1"/>
</dbReference>
<dbReference type="Pfam" id="PF00226">
    <property type="entry name" value="DnaJ"/>
    <property type="match status" value="1"/>
</dbReference>
<dbReference type="Pfam" id="PF05207">
    <property type="entry name" value="Zn_ribbon_CSL"/>
    <property type="match status" value="1"/>
</dbReference>
<dbReference type="PRINTS" id="PR00625">
    <property type="entry name" value="JDOMAIN"/>
</dbReference>
<dbReference type="SMART" id="SM00271">
    <property type="entry name" value="DnaJ"/>
    <property type="match status" value="1"/>
</dbReference>
<dbReference type="SUPFAM" id="SSF46565">
    <property type="entry name" value="Chaperone J-domain"/>
    <property type="match status" value="1"/>
</dbReference>
<dbReference type="SUPFAM" id="SSF144217">
    <property type="entry name" value="CSL zinc finger"/>
    <property type="match status" value="1"/>
</dbReference>
<dbReference type="PROSITE" id="PS50076">
    <property type="entry name" value="DNAJ_2"/>
    <property type="match status" value="1"/>
</dbReference>
<dbReference type="PROSITE" id="PS51074">
    <property type="entry name" value="DPH_MB"/>
    <property type="match status" value="1"/>
</dbReference>
<organism>
    <name type="scientific">Mus musculus</name>
    <name type="common">Mouse</name>
    <dbReference type="NCBI Taxonomy" id="10090"/>
    <lineage>
        <taxon>Eukaryota</taxon>
        <taxon>Metazoa</taxon>
        <taxon>Chordata</taxon>
        <taxon>Craniata</taxon>
        <taxon>Vertebrata</taxon>
        <taxon>Euteleostomi</taxon>
        <taxon>Mammalia</taxon>
        <taxon>Eutheria</taxon>
        <taxon>Euarchontoglires</taxon>
        <taxon>Glires</taxon>
        <taxon>Rodentia</taxon>
        <taxon>Myomorpha</taxon>
        <taxon>Muroidea</taxon>
        <taxon>Muridae</taxon>
        <taxon>Murinae</taxon>
        <taxon>Mus</taxon>
        <taxon>Mus</taxon>
    </lineage>
</organism>
<feature type="chain" id="PRO_0000082623" description="DnaJ homolog subfamily C member 24">
    <location>
        <begin position="1"/>
        <end position="148"/>
    </location>
</feature>
<feature type="domain" description="J" evidence="2">
    <location>
        <begin position="10"/>
        <end position="81"/>
    </location>
</feature>
<feature type="domain" description="DPH-type MB" evidence="3">
    <location>
        <begin position="92"/>
        <end position="147"/>
    </location>
</feature>
<feature type="binding site" evidence="3">
    <location>
        <position position="114"/>
    </location>
    <ligand>
        <name>Zn(2+)</name>
        <dbReference type="ChEBI" id="CHEBI:29105"/>
    </ligand>
</feature>
<feature type="binding site" evidence="3">
    <location>
        <position position="116"/>
    </location>
    <ligand>
        <name>Zn(2+)</name>
        <dbReference type="ChEBI" id="CHEBI:29105"/>
    </ligand>
</feature>
<feature type="binding site" evidence="3">
    <location>
        <position position="135"/>
    </location>
    <ligand>
        <name>Zn(2+)</name>
        <dbReference type="ChEBI" id="CHEBI:29105"/>
    </ligand>
</feature>
<feature type="binding site" evidence="3">
    <location>
        <position position="138"/>
    </location>
    <ligand>
        <name>Zn(2+)</name>
        <dbReference type="ChEBI" id="CHEBI:29105"/>
    </ligand>
</feature>
<feature type="sequence conflict" description="In Ref. 1; AAK21968." evidence="6" ref="1">
    <original>S</original>
    <variation>F</variation>
    <location>
        <position position="102"/>
    </location>
</feature>
<feature type="sequence conflict" description="In Ref. 1; AAK21968." evidence="6" ref="1">
    <original>H</original>
    <variation>Q</variation>
    <location>
        <position position="146"/>
    </location>
</feature>
<feature type="strand" evidence="7">
    <location>
        <begin position="4"/>
        <end position="7"/>
    </location>
</feature>
<feature type="helix" evidence="7">
    <location>
        <begin position="11"/>
        <end position="14"/>
    </location>
</feature>
<feature type="helix" evidence="7">
    <location>
        <begin position="23"/>
        <end position="32"/>
    </location>
</feature>
<feature type="strand" evidence="7">
    <location>
        <begin position="35"/>
        <end position="37"/>
    </location>
</feature>
<feature type="helix" evidence="7">
    <location>
        <begin position="48"/>
        <end position="68"/>
    </location>
</feature>
<feature type="strand" evidence="7">
    <location>
        <begin position="69"/>
        <end position="72"/>
    </location>
</feature>
<feature type="helix" evidence="7">
    <location>
        <begin position="73"/>
        <end position="80"/>
    </location>
</feature>
<proteinExistence type="evidence at protein level"/>